<feature type="initiator methionine" description="Removed" evidence="9">
    <location>
        <position position="1"/>
    </location>
</feature>
<feature type="chain" id="PRO_0000197909" description="Polyribonucleotide nucleotidyltransferase">
    <location>
        <begin position="2"/>
        <end position="705"/>
    </location>
</feature>
<feature type="domain" description="KH" evidence="1">
    <location>
        <begin position="554"/>
        <end position="613"/>
    </location>
</feature>
<feature type="domain" description="S1 motif" evidence="1">
    <location>
        <begin position="623"/>
        <end position="691"/>
    </location>
</feature>
<feature type="binding site" evidence="1">
    <location>
        <position position="487"/>
    </location>
    <ligand>
        <name>Mg(2+)</name>
        <dbReference type="ChEBI" id="CHEBI:18420"/>
    </ligand>
</feature>
<feature type="binding site" evidence="1">
    <location>
        <position position="493"/>
    </location>
    <ligand>
        <name>Mg(2+)</name>
        <dbReference type="ChEBI" id="CHEBI:18420"/>
    </ligand>
</feature>
<organism>
    <name type="scientific">Bacillus subtilis (strain 168)</name>
    <dbReference type="NCBI Taxonomy" id="224308"/>
    <lineage>
        <taxon>Bacteria</taxon>
        <taxon>Bacillati</taxon>
        <taxon>Bacillota</taxon>
        <taxon>Bacilli</taxon>
        <taxon>Bacillales</taxon>
        <taxon>Bacillaceae</taxon>
        <taxon>Bacillus</taxon>
    </lineage>
</organism>
<reference key="1">
    <citation type="journal article" date="1996" name="Mol. Microbiol.">
        <title>Polynucleotide phosphorylase is necessary for competence development in Bacillus subtilis.</title>
        <authorList>
            <person name="Luttinger A."/>
            <person name="Hahn J."/>
            <person name="Dubnau D."/>
        </authorList>
    </citation>
    <scope>NUCLEOTIDE SEQUENCE [GENOMIC DNA]</scope>
</reference>
<reference key="2">
    <citation type="journal article" date="1997" name="Nature">
        <title>The complete genome sequence of the Gram-positive bacterium Bacillus subtilis.</title>
        <authorList>
            <person name="Kunst F."/>
            <person name="Ogasawara N."/>
            <person name="Moszer I."/>
            <person name="Albertini A.M."/>
            <person name="Alloni G."/>
            <person name="Azevedo V."/>
            <person name="Bertero M.G."/>
            <person name="Bessieres P."/>
            <person name="Bolotin A."/>
            <person name="Borchert S."/>
            <person name="Borriss R."/>
            <person name="Boursier L."/>
            <person name="Brans A."/>
            <person name="Braun M."/>
            <person name="Brignell S.C."/>
            <person name="Bron S."/>
            <person name="Brouillet S."/>
            <person name="Bruschi C.V."/>
            <person name="Caldwell B."/>
            <person name="Capuano V."/>
            <person name="Carter N.M."/>
            <person name="Choi S.-K."/>
            <person name="Codani J.-J."/>
            <person name="Connerton I.F."/>
            <person name="Cummings N.J."/>
            <person name="Daniel R.A."/>
            <person name="Denizot F."/>
            <person name="Devine K.M."/>
            <person name="Duesterhoeft A."/>
            <person name="Ehrlich S.D."/>
            <person name="Emmerson P.T."/>
            <person name="Entian K.-D."/>
            <person name="Errington J."/>
            <person name="Fabret C."/>
            <person name="Ferrari E."/>
            <person name="Foulger D."/>
            <person name="Fritz C."/>
            <person name="Fujita M."/>
            <person name="Fujita Y."/>
            <person name="Fuma S."/>
            <person name="Galizzi A."/>
            <person name="Galleron N."/>
            <person name="Ghim S.-Y."/>
            <person name="Glaser P."/>
            <person name="Goffeau A."/>
            <person name="Golightly E.J."/>
            <person name="Grandi G."/>
            <person name="Guiseppi G."/>
            <person name="Guy B.J."/>
            <person name="Haga K."/>
            <person name="Haiech J."/>
            <person name="Harwood C.R."/>
            <person name="Henaut A."/>
            <person name="Hilbert H."/>
            <person name="Holsappel S."/>
            <person name="Hosono S."/>
            <person name="Hullo M.-F."/>
            <person name="Itaya M."/>
            <person name="Jones L.-M."/>
            <person name="Joris B."/>
            <person name="Karamata D."/>
            <person name="Kasahara Y."/>
            <person name="Klaerr-Blanchard M."/>
            <person name="Klein C."/>
            <person name="Kobayashi Y."/>
            <person name="Koetter P."/>
            <person name="Koningstein G."/>
            <person name="Krogh S."/>
            <person name="Kumano M."/>
            <person name="Kurita K."/>
            <person name="Lapidus A."/>
            <person name="Lardinois S."/>
            <person name="Lauber J."/>
            <person name="Lazarevic V."/>
            <person name="Lee S.-M."/>
            <person name="Levine A."/>
            <person name="Liu H."/>
            <person name="Masuda S."/>
            <person name="Mauel C."/>
            <person name="Medigue C."/>
            <person name="Medina N."/>
            <person name="Mellado R.P."/>
            <person name="Mizuno M."/>
            <person name="Moestl D."/>
            <person name="Nakai S."/>
            <person name="Noback M."/>
            <person name="Noone D."/>
            <person name="O'Reilly M."/>
            <person name="Ogawa K."/>
            <person name="Ogiwara A."/>
            <person name="Oudega B."/>
            <person name="Park S.-H."/>
            <person name="Parro V."/>
            <person name="Pohl T.M."/>
            <person name="Portetelle D."/>
            <person name="Porwollik S."/>
            <person name="Prescott A.M."/>
            <person name="Presecan E."/>
            <person name="Pujic P."/>
            <person name="Purnelle B."/>
            <person name="Rapoport G."/>
            <person name="Rey M."/>
            <person name="Reynolds S."/>
            <person name="Rieger M."/>
            <person name="Rivolta C."/>
            <person name="Rocha E."/>
            <person name="Roche B."/>
            <person name="Rose M."/>
            <person name="Sadaie Y."/>
            <person name="Sato T."/>
            <person name="Scanlan E."/>
            <person name="Schleich S."/>
            <person name="Schroeter R."/>
            <person name="Scoffone F."/>
            <person name="Sekiguchi J."/>
            <person name="Sekowska A."/>
            <person name="Seror S.J."/>
            <person name="Serror P."/>
            <person name="Shin B.-S."/>
            <person name="Soldo B."/>
            <person name="Sorokin A."/>
            <person name="Tacconi E."/>
            <person name="Takagi T."/>
            <person name="Takahashi H."/>
            <person name="Takemaru K."/>
            <person name="Takeuchi M."/>
            <person name="Tamakoshi A."/>
            <person name="Tanaka T."/>
            <person name="Terpstra P."/>
            <person name="Tognoni A."/>
            <person name="Tosato V."/>
            <person name="Uchiyama S."/>
            <person name="Vandenbol M."/>
            <person name="Vannier F."/>
            <person name="Vassarotti A."/>
            <person name="Viari A."/>
            <person name="Wambutt R."/>
            <person name="Wedler E."/>
            <person name="Wedler H."/>
            <person name="Weitzenegger T."/>
            <person name="Winters P."/>
            <person name="Wipat A."/>
            <person name="Yamamoto H."/>
            <person name="Yamane K."/>
            <person name="Yasumoto K."/>
            <person name="Yata K."/>
            <person name="Yoshida K."/>
            <person name="Yoshikawa H.-F."/>
            <person name="Zumstein E."/>
            <person name="Yoshikawa H."/>
            <person name="Danchin A."/>
        </authorList>
    </citation>
    <scope>NUCLEOTIDE SEQUENCE [LARGE SCALE GENOMIC DNA]</scope>
    <source>
        <strain>168</strain>
    </source>
</reference>
<reference key="3">
    <citation type="journal article" date="1997" name="Mol. Gen. Genet.">
        <title>Molecular cloning and characterisation of the ribC gene from Bacillus subtilis: a point mutation in ribC results in riboflavin overproduction.</title>
        <authorList>
            <person name="Coquard D."/>
            <person name="Huecas M."/>
            <person name="Ott M."/>
            <person name="van Dijl J.M."/>
            <person name="van Loon A.P."/>
            <person name="Hohmann H.P."/>
        </authorList>
    </citation>
    <scope>NUCLEOTIDE SEQUENCE [GENOMIC DNA] OF 1-9</scope>
    <source>
        <strain>168</strain>
    </source>
</reference>
<reference key="4">
    <citation type="journal article" date="1997" name="Electrophoresis">
        <title>First steps from a two-dimensional protein index towards a response-regulation map for Bacillus subtilis.</title>
        <authorList>
            <person name="Antelmann H."/>
            <person name="Bernhardt J."/>
            <person name="Schmid R."/>
            <person name="Mach H."/>
            <person name="Voelker U."/>
            <person name="Hecker M."/>
        </authorList>
    </citation>
    <scope>PROTEIN SEQUENCE OF 2-21</scope>
    <source>
        <strain>168 / IS58</strain>
    </source>
</reference>
<reference key="5">
    <citation type="journal article" date="2009" name="Mol. Cell. Proteomics">
        <title>Novel activities of glycolytic enzymes in Bacillus subtilis: interactions with essential proteins involved in mRNA processing.</title>
        <authorList>
            <person name="Commichau F.M."/>
            <person name="Rothe F.M."/>
            <person name="Herzberg C."/>
            <person name="Wagner E."/>
            <person name="Hellwig D."/>
            <person name="Lehnik-Habrink M."/>
            <person name="Hammer E."/>
            <person name="Volker U."/>
            <person name="Stulke J."/>
        </authorList>
    </citation>
    <scope>SUBUNIT</scope>
    <source>
        <strain>168</strain>
    </source>
</reference>
<reference key="6">
    <citation type="journal article" date="2010" name="Mol. Microbiol.">
        <title>The RNA degradosome in Bacillus subtilis: identification of CshA as the major RNA helicase in the multiprotein complex.</title>
        <authorList>
            <person name="Lehnik-Habrink M."/>
            <person name="Pfortner H."/>
            <person name="Rempeters L."/>
            <person name="Pietack N."/>
            <person name="Herzberg C."/>
            <person name="Stulke J."/>
        </authorList>
    </citation>
    <scope>INTERACTION WITH CSHA</scope>
    <scope>SUBUNIT</scope>
    <source>
        <strain>168</strain>
    </source>
</reference>
<reference key="7">
    <citation type="journal article" date="2011" name="J. Bacteriol.">
        <title>RNase Y in Bacillus subtilis: a natively disordered protein that is the functional equivalent of RNase E from Escherichia coli.</title>
        <authorList>
            <person name="Lehnik-Habrink M."/>
            <person name="Newman J."/>
            <person name="Rothe F.M."/>
            <person name="Solovyova A.S."/>
            <person name="Rodrigues C."/>
            <person name="Herzberg C."/>
            <person name="Commichau F.M."/>
            <person name="Lewis R.J."/>
            <person name="Stulke J."/>
        </authorList>
    </citation>
    <scope>INTERACTION WITH RNY</scope>
    <scope>SUBUNIT</scope>
    <source>
        <strain>168</strain>
    </source>
</reference>
<reference key="8">
    <citation type="journal article" date="2012" name="J. Mol. Biol.">
        <title>Dissection of the network of interactions that links RNA processing with glycolysis in the Bacillus subtilis degradosome.</title>
        <authorList>
            <person name="Newman J.A."/>
            <person name="Hewitt L."/>
            <person name="Rodrigues C."/>
            <person name="Solovyova A.S."/>
            <person name="Harwood C.R."/>
            <person name="Lewis R.J."/>
        </authorList>
    </citation>
    <scope>INTERACTION WITH RNJ1 AND RNY</scope>
    <scope>SUBUNIT</scope>
    <source>
        <strain>168</strain>
    </source>
</reference>
<reference key="9">
    <citation type="journal article" date="2012" name="Mol. Microbiol.">
        <title>BsrG/SR4 from Bacillus subtilis--the first temperature-dependent type I toxin-antitoxin system.</title>
        <authorList>
            <person name="Jahn N."/>
            <person name="Preis H."/>
            <person name="Wiedemann C."/>
            <person name="Brantl S."/>
        </authorList>
    </citation>
    <scope>FUNCTION IN ANTITOXIN SR4 PROCESSING</scope>
    <scope>DISRUPTION PHENOTYPE</scope>
    <source>
        <strain>168 / DB104</strain>
    </source>
</reference>
<reference key="10">
    <citation type="journal article" date="2013" name="J. Bacteriol.">
        <title>Bacillus subtilis mutants with knockouts of the genes encoding ribonucleases RNase Y and RNase J1 are viable, with major defects in cell morphology, sporulation, and competence.</title>
        <authorList>
            <person name="Figaro S."/>
            <person name="Durand S."/>
            <person name="Gilet L."/>
            <person name="Cayet N."/>
            <person name="Sachse M."/>
            <person name="Condon C."/>
        </authorList>
    </citation>
    <scope>FUNCTION</scope>
    <scope>DISRUPTION PHENOTYPE</scope>
    <source>
        <strain>168 trpC2</strain>
    </source>
</reference>
<reference key="11">
    <citation type="journal article" date="2016" name="RNA Biol.">
        <title>A multistress responsive type I toxin-antitoxin system: bsrE/SR5 from the B. subtilis chromosome.</title>
        <authorList>
            <person name="Mueller P."/>
            <person name="Jahn N."/>
            <person name="Ring C."/>
            <person name="Maiwald C."/>
            <person name="Neubert R."/>
            <person name="Meissner C."/>
            <person name="Brantl S."/>
        </authorList>
    </citation>
    <scope>FUNCTION IN ANTITOXIN SR5 PROCESSING</scope>
    <scope>DISRUPTION PHENOTYPE</scope>
    <source>
        <strain>168 / DB104</strain>
    </source>
</reference>
<proteinExistence type="evidence at protein level"/>
<keyword id="KW-0178">Competence</keyword>
<keyword id="KW-0963">Cytoplasm</keyword>
<keyword id="KW-0903">Direct protein sequencing</keyword>
<keyword id="KW-0460">Magnesium</keyword>
<keyword id="KW-0479">Metal-binding</keyword>
<keyword id="KW-0548">Nucleotidyltransferase</keyword>
<keyword id="KW-1185">Reference proteome</keyword>
<keyword id="KW-0694">RNA-binding</keyword>
<keyword id="KW-0808">Transferase</keyword>
<evidence type="ECO:0000255" key="1">
    <source>
        <dbReference type="HAMAP-Rule" id="MF_01595"/>
    </source>
</evidence>
<evidence type="ECO:0000269" key="2">
    <source>
    </source>
</evidence>
<evidence type="ECO:0000269" key="3">
    <source>
    </source>
</evidence>
<evidence type="ECO:0000269" key="4">
    <source>
    </source>
</evidence>
<evidence type="ECO:0000269" key="5">
    <source>
    </source>
</evidence>
<evidence type="ECO:0000269" key="6">
    <source>
    </source>
</evidence>
<evidence type="ECO:0000269" key="7">
    <source>
    </source>
</evidence>
<evidence type="ECO:0000269" key="8">
    <source>
    </source>
</evidence>
<evidence type="ECO:0000269" key="9">
    <source>
    </source>
</evidence>
<evidence type="ECO:0000305" key="10"/>
<accession>P50849</accession>
<protein>
    <recommendedName>
        <fullName evidence="1">Polyribonucleotide nucleotidyltransferase</fullName>
        <ecNumber evidence="1">2.7.7.8</ecNumber>
    </recommendedName>
    <alternativeName>
        <fullName evidence="1">Polynucleotide phosphorylase</fullName>
        <shortName evidence="1">PNPase</shortName>
    </alternativeName>
    <alternativeName>
        <fullName>Vegetative protein 15</fullName>
        <shortName>VEG15</shortName>
    </alternativeName>
</protein>
<gene>
    <name evidence="1" type="primary">pnp</name>
    <name type="synonym">comR</name>
    <name type="synonym">pnpA</name>
    <name type="ordered locus">BSU16690</name>
</gene>
<sequence length="705" mass="77464">MGQEKHVFTIDWAGRTLTVETGQLAKQANGAVMIRYGDTAVLSTATASKEPKPLDFFPLTVNYEERLYAVGKIPGGFIKREGRPSEKAVLASRLIDRPIRPLFADGFRNEVQVISIVMSVDQNCSSEMAAMFGSSLALSVSDIPFEGPIAGVTVGRIDDQFIINPTVDQLEKSDINLVVAGTKDAINMVEAGADEVPEEIMLEAIMFGHEEIKRLIAFQEEIVAAVGKEKSEIKLFEIDEELNEKVKALAEEDLLKAIQVHEKHAREDAINEVKNAVVAKFEDEEHDEDTIKQVKQILSKLVKNEVRRLITEEKVRPDGRGVDQIRPLSSEVGLLPRTHGSGLFTRGQTQALSVCTLGALGDVQILDGLGVEESKRFMHHYNFPQFSVGETGPMRGPGRREIGHGALGERALEPVIPSEKDFPYTVRLVSEVLESNGSTSQASICASTLAMMDAGVPIKAPVAGIAMGLVKSGEHYTVLTDIQGMEDALGDMDFKVAGTEKGVTALQMDIKIEGLSREILEEALQQAKKGRMEILNSMLATLSESRKELSRYAPKILTMTINPDKIRDVIGPSGKQINKIIEETGVKIDIEQDGTIFISSTDESGNQKAKKIIEDLVREVEVGQLYLGKVKRIEKFGAFVEIFSGKDGLVHISELALERVGKVEDVVKIGDEILVKVTEIDKQGRVNLSRKAVLREEKEKEEQQS</sequence>
<comment type="function">
    <text evidence="1 6 7 8">Involved in mRNA degradation. Catalyzes the phosphorolysis of single-stranded polyribonucleotides processively in the 3'- to 5'-direction. Necessary for competence development in Bacillus subtilis. May be necessary for modification of the srfA transcript (stabilization or translation activation). Involved in processing precursor type I toxin-antitoxin RNAs antitoxin SR4 and SR5 RNAs to their mature forms (PubMed:22229825, PubMed:26940229).</text>
</comment>
<comment type="catalytic activity">
    <reaction evidence="1">
        <text>RNA(n+1) + phosphate = RNA(n) + a ribonucleoside 5'-diphosphate</text>
        <dbReference type="Rhea" id="RHEA:22096"/>
        <dbReference type="Rhea" id="RHEA-COMP:14527"/>
        <dbReference type="Rhea" id="RHEA-COMP:17342"/>
        <dbReference type="ChEBI" id="CHEBI:43474"/>
        <dbReference type="ChEBI" id="CHEBI:57930"/>
        <dbReference type="ChEBI" id="CHEBI:140395"/>
        <dbReference type="EC" id="2.7.7.8"/>
    </reaction>
</comment>
<comment type="cofactor">
    <cofactor evidence="1">
        <name>Mg(2+)</name>
        <dbReference type="ChEBI" id="CHEBI:18420"/>
    </cofactor>
</comment>
<comment type="subunit">
    <text evidence="2 3 4 5 10">Homodimer (Probable). Component of a possible RNA degradosome complex composed of rny, rnjA, rnjB, pnp, pfkA and eno (although rnjA and rnjB's presence is unclear) (PubMed:19193632). RNA helicase CshA may also be a member of this complex (PubMed:20572937).</text>
</comment>
<comment type="interaction">
    <interactant intactId="EBI-5254714">
        <id>P50849</id>
    </interactant>
    <interactant intactId="EBI-6415578">
        <id>O31774</id>
        <label>rny</label>
    </interactant>
    <organismsDiffer>false</organismsDiffer>
    <experiments>2</experiments>
</comment>
<comment type="subcellular location">
    <subcellularLocation>
        <location>Cytoplasm</location>
    </subcellularLocation>
</comment>
<comment type="disruption phenotype">
    <text evidence="6 7 8">Not essential, doubling time increased slightly. About 800-fold less compentent for plasmid transformation, no effect on sporulation efficiency. Grows poorly at 18 degrees Celsius. Increased sensitivity to several translation inhibiting antibiotics such as tetracycline, erythromycin and chloramphenicol, but increased resistance to streptomycin and nalidixic acid. Forms long filamentous cells, probably due to defective septum formation, cell walls are altered with looser, less dense peptidoglycan. Double pnp-rny mutants grow very slowly, while pnp-rnjA mutants could not be isolated (PubMed:23504012). Accumulation of precursor forms of type I toxin-antitoxin system antitoxin RNAs SR4 and SR5 (PubMed:22229825, PubMed:26940229).</text>
</comment>
<comment type="similarity">
    <text evidence="1">Belongs to the polyribonucleotide nucleotidyltransferase family.</text>
</comment>
<dbReference type="EC" id="2.7.7.8" evidence="1"/>
<dbReference type="EMBL" id="U29668">
    <property type="protein sequence ID" value="AAC43595.1"/>
    <property type="molecule type" value="Genomic_DNA"/>
</dbReference>
<dbReference type="EMBL" id="AL009126">
    <property type="protein sequence ID" value="CAB13542.1"/>
    <property type="molecule type" value="Genomic_DNA"/>
</dbReference>
<dbReference type="EMBL" id="Z80835">
    <property type="protein sequence ID" value="CAB02561.1"/>
    <property type="molecule type" value="Genomic_DNA"/>
</dbReference>
<dbReference type="PIR" id="S70691">
    <property type="entry name" value="S70691"/>
</dbReference>
<dbReference type="RefSeq" id="NP_389551.1">
    <property type="nucleotide sequence ID" value="NC_000964.3"/>
</dbReference>
<dbReference type="RefSeq" id="WP_003231897.1">
    <property type="nucleotide sequence ID" value="NZ_OZ025638.1"/>
</dbReference>
<dbReference type="SMR" id="P50849"/>
<dbReference type="FunCoup" id="P50849">
    <property type="interactions" value="680"/>
</dbReference>
<dbReference type="IntAct" id="P50849">
    <property type="interactions" value="4"/>
</dbReference>
<dbReference type="MINT" id="P50849"/>
<dbReference type="STRING" id="224308.BSU16690"/>
<dbReference type="jPOST" id="P50849"/>
<dbReference type="PaxDb" id="224308-BSU16690"/>
<dbReference type="EnsemblBacteria" id="CAB13542">
    <property type="protein sequence ID" value="CAB13542"/>
    <property type="gene ID" value="BSU_16690"/>
</dbReference>
<dbReference type="GeneID" id="939646"/>
<dbReference type="KEGG" id="bsu:BSU16690"/>
<dbReference type="PATRIC" id="fig|224308.179.peg.1810"/>
<dbReference type="eggNOG" id="COG1185">
    <property type="taxonomic scope" value="Bacteria"/>
</dbReference>
<dbReference type="InParanoid" id="P50849"/>
<dbReference type="OrthoDB" id="9804305at2"/>
<dbReference type="PhylomeDB" id="P50849"/>
<dbReference type="BioCyc" id="BSUB:BSU16690-MONOMER"/>
<dbReference type="BRENDA" id="2.7.7.8">
    <property type="organism ID" value="658"/>
</dbReference>
<dbReference type="SABIO-RK" id="P50849"/>
<dbReference type="Proteomes" id="UP000001570">
    <property type="component" value="Chromosome"/>
</dbReference>
<dbReference type="GO" id="GO:0005829">
    <property type="term" value="C:cytosol"/>
    <property type="evidence" value="ECO:0000318"/>
    <property type="project" value="GO_Central"/>
</dbReference>
<dbReference type="GO" id="GO:0000175">
    <property type="term" value="F:3'-5'-RNA exonuclease activity"/>
    <property type="evidence" value="ECO:0000318"/>
    <property type="project" value="GO_Central"/>
</dbReference>
<dbReference type="GO" id="GO:0000287">
    <property type="term" value="F:magnesium ion binding"/>
    <property type="evidence" value="ECO:0007669"/>
    <property type="project" value="UniProtKB-UniRule"/>
</dbReference>
<dbReference type="GO" id="GO:0004654">
    <property type="term" value="F:polyribonucleotide nucleotidyltransferase activity"/>
    <property type="evidence" value="ECO:0000318"/>
    <property type="project" value="GO_Central"/>
</dbReference>
<dbReference type="GO" id="GO:0003723">
    <property type="term" value="F:RNA binding"/>
    <property type="evidence" value="ECO:0007669"/>
    <property type="project" value="UniProtKB-UniRule"/>
</dbReference>
<dbReference type="GO" id="GO:0030420">
    <property type="term" value="P:establishment of competence for transformation"/>
    <property type="evidence" value="ECO:0007669"/>
    <property type="project" value="UniProtKB-KW"/>
</dbReference>
<dbReference type="GO" id="GO:0006402">
    <property type="term" value="P:mRNA catabolic process"/>
    <property type="evidence" value="ECO:0007669"/>
    <property type="project" value="UniProtKB-UniRule"/>
</dbReference>
<dbReference type="GO" id="GO:0006401">
    <property type="term" value="P:RNA catabolic process"/>
    <property type="evidence" value="ECO:0000318"/>
    <property type="project" value="GO_Central"/>
</dbReference>
<dbReference type="GO" id="GO:0006396">
    <property type="term" value="P:RNA processing"/>
    <property type="evidence" value="ECO:0007669"/>
    <property type="project" value="InterPro"/>
</dbReference>
<dbReference type="CDD" id="cd02393">
    <property type="entry name" value="KH-I_PNPase"/>
    <property type="match status" value="1"/>
</dbReference>
<dbReference type="CDD" id="cd11363">
    <property type="entry name" value="RNase_PH_PNPase_1"/>
    <property type="match status" value="1"/>
</dbReference>
<dbReference type="CDD" id="cd11364">
    <property type="entry name" value="RNase_PH_PNPase_2"/>
    <property type="match status" value="1"/>
</dbReference>
<dbReference type="CDD" id="cd04472">
    <property type="entry name" value="S1_PNPase"/>
    <property type="match status" value="1"/>
</dbReference>
<dbReference type="FunFam" id="2.40.50.140:FF:000023">
    <property type="entry name" value="Polyribonucleotide nucleotidyltransferase"/>
    <property type="match status" value="1"/>
</dbReference>
<dbReference type="FunFam" id="3.30.1370.10:FF:000001">
    <property type="entry name" value="Polyribonucleotide nucleotidyltransferase"/>
    <property type="match status" value="1"/>
</dbReference>
<dbReference type="FunFam" id="3.30.230.70:FF:000001">
    <property type="entry name" value="Polyribonucleotide nucleotidyltransferase"/>
    <property type="match status" value="1"/>
</dbReference>
<dbReference type="FunFam" id="3.30.230.70:FF:000002">
    <property type="entry name" value="Polyribonucleotide nucleotidyltransferase"/>
    <property type="match status" value="1"/>
</dbReference>
<dbReference type="Gene3D" id="3.30.230.70">
    <property type="entry name" value="GHMP Kinase, N-terminal domain"/>
    <property type="match status" value="2"/>
</dbReference>
<dbReference type="Gene3D" id="3.30.1370.10">
    <property type="entry name" value="K Homology domain, type 1"/>
    <property type="match status" value="1"/>
</dbReference>
<dbReference type="Gene3D" id="2.40.50.140">
    <property type="entry name" value="Nucleic acid-binding proteins"/>
    <property type="match status" value="1"/>
</dbReference>
<dbReference type="HAMAP" id="MF_01595">
    <property type="entry name" value="PNPase"/>
    <property type="match status" value="1"/>
</dbReference>
<dbReference type="InterPro" id="IPR001247">
    <property type="entry name" value="ExoRNase_PH_dom1"/>
</dbReference>
<dbReference type="InterPro" id="IPR015847">
    <property type="entry name" value="ExoRNase_PH_dom2"/>
</dbReference>
<dbReference type="InterPro" id="IPR036345">
    <property type="entry name" value="ExoRNase_PH_dom2_sf"/>
</dbReference>
<dbReference type="InterPro" id="IPR004087">
    <property type="entry name" value="KH_dom"/>
</dbReference>
<dbReference type="InterPro" id="IPR004088">
    <property type="entry name" value="KH_dom_type_1"/>
</dbReference>
<dbReference type="InterPro" id="IPR036612">
    <property type="entry name" value="KH_dom_type_1_sf"/>
</dbReference>
<dbReference type="InterPro" id="IPR012340">
    <property type="entry name" value="NA-bd_OB-fold"/>
</dbReference>
<dbReference type="InterPro" id="IPR012162">
    <property type="entry name" value="PNPase"/>
</dbReference>
<dbReference type="InterPro" id="IPR027408">
    <property type="entry name" value="PNPase/RNase_PH_dom_sf"/>
</dbReference>
<dbReference type="InterPro" id="IPR015848">
    <property type="entry name" value="PNPase_PH_RNA-bd_bac/org-type"/>
</dbReference>
<dbReference type="InterPro" id="IPR020568">
    <property type="entry name" value="Ribosomal_Su5_D2-typ_SF"/>
</dbReference>
<dbReference type="InterPro" id="IPR003029">
    <property type="entry name" value="S1_domain"/>
</dbReference>
<dbReference type="NCBIfam" id="TIGR03591">
    <property type="entry name" value="polynuc_phos"/>
    <property type="match status" value="1"/>
</dbReference>
<dbReference type="NCBIfam" id="NF008805">
    <property type="entry name" value="PRK11824.1"/>
    <property type="match status" value="1"/>
</dbReference>
<dbReference type="PANTHER" id="PTHR11252">
    <property type="entry name" value="POLYRIBONUCLEOTIDE NUCLEOTIDYLTRANSFERASE"/>
    <property type="match status" value="1"/>
</dbReference>
<dbReference type="PANTHER" id="PTHR11252:SF0">
    <property type="entry name" value="POLYRIBONUCLEOTIDE NUCLEOTIDYLTRANSFERASE 1, MITOCHONDRIAL"/>
    <property type="match status" value="1"/>
</dbReference>
<dbReference type="Pfam" id="PF00013">
    <property type="entry name" value="KH_1"/>
    <property type="match status" value="1"/>
</dbReference>
<dbReference type="Pfam" id="PF03726">
    <property type="entry name" value="PNPase"/>
    <property type="match status" value="1"/>
</dbReference>
<dbReference type="Pfam" id="PF01138">
    <property type="entry name" value="RNase_PH"/>
    <property type="match status" value="2"/>
</dbReference>
<dbReference type="Pfam" id="PF03725">
    <property type="entry name" value="RNase_PH_C"/>
    <property type="match status" value="2"/>
</dbReference>
<dbReference type="Pfam" id="PF00575">
    <property type="entry name" value="S1"/>
    <property type="match status" value="1"/>
</dbReference>
<dbReference type="PIRSF" id="PIRSF005499">
    <property type="entry name" value="PNPase"/>
    <property type="match status" value="1"/>
</dbReference>
<dbReference type="SMART" id="SM00322">
    <property type="entry name" value="KH"/>
    <property type="match status" value="1"/>
</dbReference>
<dbReference type="SMART" id="SM00316">
    <property type="entry name" value="S1"/>
    <property type="match status" value="1"/>
</dbReference>
<dbReference type="SUPFAM" id="SSF54791">
    <property type="entry name" value="Eukaryotic type KH-domain (KH-domain type I)"/>
    <property type="match status" value="1"/>
</dbReference>
<dbReference type="SUPFAM" id="SSF50249">
    <property type="entry name" value="Nucleic acid-binding proteins"/>
    <property type="match status" value="1"/>
</dbReference>
<dbReference type="SUPFAM" id="SSF55666">
    <property type="entry name" value="Ribonuclease PH domain 2-like"/>
    <property type="match status" value="2"/>
</dbReference>
<dbReference type="SUPFAM" id="SSF54211">
    <property type="entry name" value="Ribosomal protein S5 domain 2-like"/>
    <property type="match status" value="2"/>
</dbReference>
<dbReference type="PROSITE" id="PS50084">
    <property type="entry name" value="KH_TYPE_1"/>
    <property type="match status" value="1"/>
</dbReference>
<dbReference type="PROSITE" id="PS50126">
    <property type="entry name" value="S1"/>
    <property type="match status" value="1"/>
</dbReference>
<name>PNP_BACSU</name>